<gene>
    <name evidence="1" type="primary">rpmE2</name>
    <name type="ordered locus">LAF_0204</name>
</gene>
<accession>B2GA58</accession>
<sequence>MKQGIHPDYHLVVFEDSATGYKFISGSTATSKETVEWEDGNEYPLVRVEVTSDSHPFYTGKQKFTQADGAVDKFNKKYGFK</sequence>
<reference key="1">
    <citation type="journal article" date="2008" name="DNA Res.">
        <title>Comparative genome analysis of Lactobacillus reuteri and Lactobacillus fermentum reveal a genomic island for reuterin and cobalamin production.</title>
        <authorList>
            <person name="Morita H."/>
            <person name="Toh H."/>
            <person name="Fukuda S."/>
            <person name="Horikawa H."/>
            <person name="Oshima K."/>
            <person name="Suzuki T."/>
            <person name="Murakami M."/>
            <person name="Hisamatsu S."/>
            <person name="Kato Y."/>
            <person name="Takizawa T."/>
            <person name="Fukuoka H."/>
            <person name="Yoshimura T."/>
            <person name="Itoh K."/>
            <person name="O'Sullivan D.J."/>
            <person name="McKay L.L."/>
            <person name="Ohno H."/>
            <person name="Kikuchi J."/>
            <person name="Masaoka T."/>
            <person name="Hattori M."/>
        </authorList>
    </citation>
    <scope>NUCLEOTIDE SEQUENCE [LARGE SCALE GENOMIC DNA]</scope>
    <source>
        <strain>NBRC 3956 / LMG 18251</strain>
    </source>
</reference>
<evidence type="ECO:0000255" key="1">
    <source>
        <dbReference type="HAMAP-Rule" id="MF_00502"/>
    </source>
</evidence>
<evidence type="ECO:0000305" key="2"/>
<protein>
    <recommendedName>
        <fullName evidence="1">Large ribosomal subunit protein bL31B</fullName>
    </recommendedName>
    <alternativeName>
        <fullName evidence="2">50S ribosomal protein L31 type B</fullName>
    </alternativeName>
</protein>
<feature type="chain" id="PRO_1000126816" description="Large ribosomal subunit protein bL31B">
    <location>
        <begin position="1"/>
        <end position="81"/>
    </location>
</feature>
<organism>
    <name type="scientific">Limosilactobacillus fermentum (strain NBRC 3956 / LMG 18251)</name>
    <name type="common">Lactobacillus fermentum</name>
    <dbReference type="NCBI Taxonomy" id="334390"/>
    <lineage>
        <taxon>Bacteria</taxon>
        <taxon>Bacillati</taxon>
        <taxon>Bacillota</taxon>
        <taxon>Bacilli</taxon>
        <taxon>Lactobacillales</taxon>
        <taxon>Lactobacillaceae</taxon>
        <taxon>Limosilactobacillus</taxon>
    </lineage>
</organism>
<proteinExistence type="inferred from homology"/>
<keyword id="KW-1185">Reference proteome</keyword>
<keyword id="KW-0687">Ribonucleoprotein</keyword>
<keyword id="KW-0689">Ribosomal protein</keyword>
<dbReference type="EMBL" id="AP008937">
    <property type="protein sequence ID" value="BAG26540.1"/>
    <property type="molecule type" value="Genomic_DNA"/>
</dbReference>
<dbReference type="RefSeq" id="WP_003684008.1">
    <property type="nucleotide sequence ID" value="NC_010610.1"/>
</dbReference>
<dbReference type="SMR" id="B2GA58"/>
<dbReference type="KEGG" id="lfe:LAF_0204"/>
<dbReference type="eggNOG" id="COG0254">
    <property type="taxonomic scope" value="Bacteria"/>
</dbReference>
<dbReference type="HOGENOM" id="CLU_114306_2_2_9"/>
<dbReference type="Proteomes" id="UP000001697">
    <property type="component" value="Chromosome"/>
</dbReference>
<dbReference type="GO" id="GO:1990904">
    <property type="term" value="C:ribonucleoprotein complex"/>
    <property type="evidence" value="ECO:0007669"/>
    <property type="project" value="UniProtKB-KW"/>
</dbReference>
<dbReference type="GO" id="GO:0005840">
    <property type="term" value="C:ribosome"/>
    <property type="evidence" value="ECO:0007669"/>
    <property type="project" value="UniProtKB-KW"/>
</dbReference>
<dbReference type="GO" id="GO:0003735">
    <property type="term" value="F:structural constituent of ribosome"/>
    <property type="evidence" value="ECO:0007669"/>
    <property type="project" value="InterPro"/>
</dbReference>
<dbReference type="GO" id="GO:0006412">
    <property type="term" value="P:translation"/>
    <property type="evidence" value="ECO:0007669"/>
    <property type="project" value="UniProtKB-UniRule"/>
</dbReference>
<dbReference type="Gene3D" id="4.10.830.30">
    <property type="entry name" value="Ribosomal protein L31"/>
    <property type="match status" value="1"/>
</dbReference>
<dbReference type="HAMAP" id="MF_00502">
    <property type="entry name" value="Ribosomal_bL31_2"/>
    <property type="match status" value="1"/>
</dbReference>
<dbReference type="InterPro" id="IPR034704">
    <property type="entry name" value="Ribosomal_bL28/bL31-like_sf"/>
</dbReference>
<dbReference type="InterPro" id="IPR002150">
    <property type="entry name" value="Ribosomal_bL31"/>
</dbReference>
<dbReference type="InterPro" id="IPR027493">
    <property type="entry name" value="Ribosomal_bL31_B"/>
</dbReference>
<dbReference type="InterPro" id="IPR042105">
    <property type="entry name" value="Ribosomal_bL31_sf"/>
</dbReference>
<dbReference type="NCBIfam" id="TIGR00105">
    <property type="entry name" value="L31"/>
    <property type="match status" value="1"/>
</dbReference>
<dbReference type="NCBIfam" id="NF002462">
    <property type="entry name" value="PRK01678.1"/>
    <property type="match status" value="1"/>
</dbReference>
<dbReference type="PANTHER" id="PTHR33280">
    <property type="entry name" value="50S RIBOSOMAL PROTEIN L31, CHLOROPLASTIC"/>
    <property type="match status" value="1"/>
</dbReference>
<dbReference type="PANTHER" id="PTHR33280:SF1">
    <property type="entry name" value="LARGE RIBOSOMAL SUBUNIT PROTEIN BL31C"/>
    <property type="match status" value="1"/>
</dbReference>
<dbReference type="Pfam" id="PF01197">
    <property type="entry name" value="Ribosomal_L31"/>
    <property type="match status" value="1"/>
</dbReference>
<dbReference type="PRINTS" id="PR01249">
    <property type="entry name" value="RIBOSOMALL31"/>
</dbReference>
<dbReference type="SUPFAM" id="SSF143800">
    <property type="entry name" value="L28p-like"/>
    <property type="match status" value="1"/>
</dbReference>
<name>RL31B_LIMF3</name>
<comment type="subunit">
    <text evidence="1">Part of the 50S ribosomal subunit.</text>
</comment>
<comment type="similarity">
    <text evidence="1">Belongs to the bacterial ribosomal protein bL31 family. Type B subfamily.</text>
</comment>